<name>JMJCD_DICDI</name>
<protein>
    <recommendedName>
        <fullName>JmjC domain-containing protein D</fullName>
    </recommendedName>
    <alternativeName>
        <fullName>Jumonji domain-containing protein D</fullName>
    </alternativeName>
</protein>
<feature type="chain" id="PRO_0000330926" description="JmjC domain-containing protein D">
    <location>
        <begin position="1"/>
        <end position="448"/>
    </location>
</feature>
<feature type="domain" description="JmjC" evidence="1">
    <location>
        <begin position="305"/>
        <end position="448"/>
    </location>
</feature>
<dbReference type="EMBL" id="AAFI02000005">
    <property type="protein sequence ID" value="EAL72803.1"/>
    <property type="molecule type" value="Genomic_DNA"/>
</dbReference>
<dbReference type="RefSeq" id="XP_646176.1">
    <property type="nucleotide sequence ID" value="XM_641084.1"/>
</dbReference>
<dbReference type="SMR" id="Q55DF5"/>
<dbReference type="FunCoup" id="Q55DF5">
    <property type="interactions" value="1"/>
</dbReference>
<dbReference type="PaxDb" id="44689-DDB0238370"/>
<dbReference type="EnsemblProtists" id="EAL72803">
    <property type="protein sequence ID" value="EAL72803"/>
    <property type="gene ID" value="DDB_G0270906"/>
</dbReference>
<dbReference type="GeneID" id="8617129"/>
<dbReference type="KEGG" id="ddi:DDB_G0270906"/>
<dbReference type="dictyBase" id="DDB_G0270906">
    <property type="gene designation" value="jcdD"/>
</dbReference>
<dbReference type="VEuPathDB" id="AmoebaDB:DDB_G0270906"/>
<dbReference type="eggNOG" id="KOG2132">
    <property type="taxonomic scope" value="Eukaryota"/>
</dbReference>
<dbReference type="HOGENOM" id="CLU_016785_0_1_1"/>
<dbReference type="InParanoid" id="Q55DF5"/>
<dbReference type="OMA" id="NIVHELY"/>
<dbReference type="PhylomeDB" id="Q55DF5"/>
<dbReference type="Reactome" id="R-DDI-9629569">
    <property type="pathway name" value="Protein hydroxylation"/>
</dbReference>
<dbReference type="PRO" id="PR:Q55DF5"/>
<dbReference type="Proteomes" id="UP000002195">
    <property type="component" value="Chromosome 1"/>
</dbReference>
<dbReference type="GO" id="GO:0016706">
    <property type="term" value="F:2-oxoglutarate-dependent dioxygenase activity"/>
    <property type="evidence" value="ECO:0000318"/>
    <property type="project" value="GO_Central"/>
</dbReference>
<dbReference type="FunFam" id="2.60.120.650:FF:000046">
    <property type="entry name" value="JmjC domain-containing protein D"/>
    <property type="match status" value="1"/>
</dbReference>
<dbReference type="Gene3D" id="2.60.120.650">
    <property type="entry name" value="Cupin"/>
    <property type="match status" value="1"/>
</dbReference>
<dbReference type="InterPro" id="IPR041667">
    <property type="entry name" value="Cupin_8"/>
</dbReference>
<dbReference type="InterPro" id="IPR003347">
    <property type="entry name" value="JmjC_dom"/>
</dbReference>
<dbReference type="PANTHER" id="PTHR12461">
    <property type="entry name" value="HYPOXIA-INDUCIBLE FACTOR 1 ALPHA INHIBITOR-RELATED"/>
    <property type="match status" value="1"/>
</dbReference>
<dbReference type="PANTHER" id="PTHR12461:SF105">
    <property type="entry name" value="HYPOXIA-INDUCIBLE FACTOR 1-ALPHA INHIBITOR"/>
    <property type="match status" value="1"/>
</dbReference>
<dbReference type="Pfam" id="PF13621">
    <property type="entry name" value="Cupin_8"/>
    <property type="match status" value="1"/>
</dbReference>
<dbReference type="SMART" id="SM00558">
    <property type="entry name" value="JmjC"/>
    <property type="match status" value="1"/>
</dbReference>
<dbReference type="SUPFAM" id="SSF51197">
    <property type="entry name" value="Clavaminate synthase-like"/>
    <property type="match status" value="1"/>
</dbReference>
<dbReference type="PROSITE" id="PS51184">
    <property type="entry name" value="JMJC"/>
    <property type="match status" value="1"/>
</dbReference>
<sequence>MDYYQSELIKLFQKSNEIYKDNNFETKLNEKNYKFLLVYLNSIHSILKIDMKLNIYQYINIEFKELILISKELMKIVFDIIHSGTWNNIDILFKDLFAYSSILYIYSFFLIQFKNIKVDNNNNNNININIPNPIKKIILKKLDLALIFGDKLFNQVINQIINLISNNNNNNNNNFLNNFKNENYNNNNENEIILNKEKLIKRISRPPSLNEFKNEYMIKGNPCVIENLMKEWPCFNERNWSDLNYLKNVAGSRLVPIEIGPNYLHEKMKQKLINFNKFIDEYIISKNSDDDNDDIGYLAQTKLFEQIPQLRNDILIPEYCKIKIGCGDDDNDNNKEDNVEINAWLGPKGTVTPLHYDPKHNFLCQIVGRKYIKLFSPKESNNLYPHLNSKLFFNTSMVDVENPDHSKFPLFKNCDYIELILNAGEILYIPPTYWHFVKSLSQSFSIFP</sequence>
<gene>
    <name type="primary">jcdD</name>
    <name type="ORF">DDB_G0270906</name>
</gene>
<evidence type="ECO:0000255" key="1">
    <source>
        <dbReference type="PROSITE-ProRule" id="PRU00538"/>
    </source>
</evidence>
<organism>
    <name type="scientific">Dictyostelium discoideum</name>
    <name type="common">Social amoeba</name>
    <dbReference type="NCBI Taxonomy" id="44689"/>
    <lineage>
        <taxon>Eukaryota</taxon>
        <taxon>Amoebozoa</taxon>
        <taxon>Evosea</taxon>
        <taxon>Eumycetozoa</taxon>
        <taxon>Dictyostelia</taxon>
        <taxon>Dictyosteliales</taxon>
        <taxon>Dictyosteliaceae</taxon>
        <taxon>Dictyostelium</taxon>
    </lineage>
</organism>
<reference key="1">
    <citation type="journal article" date="2005" name="Nature">
        <title>The genome of the social amoeba Dictyostelium discoideum.</title>
        <authorList>
            <person name="Eichinger L."/>
            <person name="Pachebat J.A."/>
            <person name="Gloeckner G."/>
            <person name="Rajandream M.A."/>
            <person name="Sucgang R."/>
            <person name="Berriman M."/>
            <person name="Song J."/>
            <person name="Olsen R."/>
            <person name="Szafranski K."/>
            <person name="Xu Q."/>
            <person name="Tunggal B."/>
            <person name="Kummerfeld S."/>
            <person name="Madera M."/>
            <person name="Konfortov B.A."/>
            <person name="Rivero F."/>
            <person name="Bankier A.T."/>
            <person name="Lehmann R."/>
            <person name="Hamlin N."/>
            <person name="Davies R."/>
            <person name="Gaudet P."/>
            <person name="Fey P."/>
            <person name="Pilcher K."/>
            <person name="Chen G."/>
            <person name="Saunders D."/>
            <person name="Sodergren E.J."/>
            <person name="Davis P."/>
            <person name="Kerhornou A."/>
            <person name="Nie X."/>
            <person name="Hall N."/>
            <person name="Anjard C."/>
            <person name="Hemphill L."/>
            <person name="Bason N."/>
            <person name="Farbrother P."/>
            <person name="Desany B."/>
            <person name="Just E."/>
            <person name="Morio T."/>
            <person name="Rost R."/>
            <person name="Churcher C.M."/>
            <person name="Cooper J."/>
            <person name="Haydock S."/>
            <person name="van Driessche N."/>
            <person name="Cronin A."/>
            <person name="Goodhead I."/>
            <person name="Muzny D.M."/>
            <person name="Mourier T."/>
            <person name="Pain A."/>
            <person name="Lu M."/>
            <person name="Harper D."/>
            <person name="Lindsay R."/>
            <person name="Hauser H."/>
            <person name="James K.D."/>
            <person name="Quiles M."/>
            <person name="Madan Babu M."/>
            <person name="Saito T."/>
            <person name="Buchrieser C."/>
            <person name="Wardroper A."/>
            <person name="Felder M."/>
            <person name="Thangavelu M."/>
            <person name="Johnson D."/>
            <person name="Knights A."/>
            <person name="Loulseged H."/>
            <person name="Mungall K.L."/>
            <person name="Oliver K."/>
            <person name="Price C."/>
            <person name="Quail M.A."/>
            <person name="Urushihara H."/>
            <person name="Hernandez J."/>
            <person name="Rabbinowitsch E."/>
            <person name="Steffen D."/>
            <person name="Sanders M."/>
            <person name="Ma J."/>
            <person name="Kohara Y."/>
            <person name="Sharp S."/>
            <person name="Simmonds M.N."/>
            <person name="Spiegler S."/>
            <person name="Tivey A."/>
            <person name="Sugano S."/>
            <person name="White B."/>
            <person name="Walker D."/>
            <person name="Woodward J.R."/>
            <person name="Winckler T."/>
            <person name="Tanaka Y."/>
            <person name="Shaulsky G."/>
            <person name="Schleicher M."/>
            <person name="Weinstock G.M."/>
            <person name="Rosenthal A."/>
            <person name="Cox E.C."/>
            <person name="Chisholm R.L."/>
            <person name="Gibbs R.A."/>
            <person name="Loomis W.F."/>
            <person name="Platzer M."/>
            <person name="Kay R.R."/>
            <person name="Williams J.G."/>
            <person name="Dear P.H."/>
            <person name="Noegel A.A."/>
            <person name="Barrell B.G."/>
            <person name="Kuspa A."/>
        </authorList>
    </citation>
    <scope>NUCLEOTIDE SEQUENCE [LARGE SCALE GENOMIC DNA]</scope>
    <source>
        <strain>AX4</strain>
    </source>
</reference>
<keyword id="KW-1185">Reference proteome</keyword>
<accession>Q55DF5</accession>
<proteinExistence type="predicted"/>